<comment type="function">
    <text>Insulin decreases blood glucose concentration. It increases cell permeability to monosaccharides, amino acids and fatty acids. It accelerates glycolysis, the pentose phosphate cycle, and glycogen synthesis in liver.</text>
</comment>
<comment type="subunit">
    <text>Heterodimer of a B chain and an A chain linked by two disulfide bonds.</text>
</comment>
<comment type="subcellular location">
    <subcellularLocation>
        <location>Secreted</location>
    </subcellularLocation>
</comment>
<comment type="similarity">
    <text evidence="3">Belongs to the insulin family.</text>
</comment>
<organism>
    <name type="scientific">Aotus trivirgatus</name>
    <name type="common">Three-striped night monkey</name>
    <name type="synonym">Douroucouli</name>
    <dbReference type="NCBI Taxonomy" id="9505"/>
    <lineage>
        <taxon>Eukaryota</taxon>
        <taxon>Metazoa</taxon>
        <taxon>Chordata</taxon>
        <taxon>Craniata</taxon>
        <taxon>Vertebrata</taxon>
        <taxon>Euteleostomi</taxon>
        <taxon>Mammalia</taxon>
        <taxon>Eutheria</taxon>
        <taxon>Euarchontoglires</taxon>
        <taxon>Primates</taxon>
        <taxon>Haplorrhini</taxon>
        <taxon>Platyrrhini</taxon>
        <taxon>Aotidae</taxon>
        <taxon>Aotus</taxon>
    </lineage>
</organism>
<gene>
    <name type="primary">INS</name>
</gene>
<evidence type="ECO:0000250" key="1"/>
<evidence type="ECO:0000255" key="2"/>
<evidence type="ECO:0000305" key="3"/>
<sequence>MALWMHLLPLLALLALWGPEPAPAFVNQHLCGPHLVEALYLVCGERGFFYAPKTRREAEDLQVGQVELGGGSITGSLPPLEGPMQKRGVVDQCCTSICSLYQLQNYCN</sequence>
<dbReference type="EMBL" id="J02989">
    <property type="protein sequence ID" value="AAA35374.1"/>
    <property type="molecule type" value="Genomic_DNA"/>
</dbReference>
<dbReference type="PIR" id="A39883">
    <property type="entry name" value="A39883"/>
</dbReference>
<dbReference type="SMR" id="P67972"/>
<dbReference type="GO" id="GO:0005615">
    <property type="term" value="C:extracellular space"/>
    <property type="evidence" value="ECO:0007669"/>
    <property type="project" value="TreeGrafter"/>
</dbReference>
<dbReference type="GO" id="GO:0005179">
    <property type="term" value="F:hormone activity"/>
    <property type="evidence" value="ECO:0007669"/>
    <property type="project" value="UniProtKB-KW"/>
</dbReference>
<dbReference type="GO" id="GO:1901701">
    <property type="term" value="P:cellular response to oxygen-containing compound"/>
    <property type="evidence" value="ECO:0007669"/>
    <property type="project" value="UniProtKB-ARBA"/>
</dbReference>
<dbReference type="GO" id="GO:0042593">
    <property type="term" value="P:glucose homeostasis"/>
    <property type="evidence" value="ECO:0007669"/>
    <property type="project" value="TreeGrafter"/>
</dbReference>
<dbReference type="GO" id="GO:0006006">
    <property type="term" value="P:glucose metabolic process"/>
    <property type="evidence" value="ECO:0007669"/>
    <property type="project" value="UniProtKB-KW"/>
</dbReference>
<dbReference type="GO" id="GO:0050714">
    <property type="term" value="P:positive regulation of protein secretion"/>
    <property type="evidence" value="ECO:0007669"/>
    <property type="project" value="TreeGrafter"/>
</dbReference>
<dbReference type="CDD" id="cd04367">
    <property type="entry name" value="IlGF_insulin_like"/>
    <property type="match status" value="1"/>
</dbReference>
<dbReference type="FunFam" id="1.10.100.10:FF:000003">
    <property type="entry name" value="Insulin"/>
    <property type="match status" value="1"/>
</dbReference>
<dbReference type="Gene3D" id="1.10.100.10">
    <property type="entry name" value="Insulin-like"/>
    <property type="match status" value="1"/>
</dbReference>
<dbReference type="InterPro" id="IPR004825">
    <property type="entry name" value="Insulin"/>
</dbReference>
<dbReference type="InterPro" id="IPR016179">
    <property type="entry name" value="Insulin-like"/>
</dbReference>
<dbReference type="InterPro" id="IPR036438">
    <property type="entry name" value="Insulin-like_sf"/>
</dbReference>
<dbReference type="InterPro" id="IPR022353">
    <property type="entry name" value="Insulin_CS"/>
</dbReference>
<dbReference type="InterPro" id="IPR022352">
    <property type="entry name" value="Insulin_family"/>
</dbReference>
<dbReference type="PANTHER" id="PTHR11454:SF9">
    <property type="entry name" value="INSULIN"/>
    <property type="match status" value="1"/>
</dbReference>
<dbReference type="PANTHER" id="PTHR11454">
    <property type="entry name" value="INSULIN/INSULIN GROWTH FACTOR"/>
    <property type="match status" value="1"/>
</dbReference>
<dbReference type="Pfam" id="PF00049">
    <property type="entry name" value="Insulin"/>
    <property type="match status" value="1"/>
</dbReference>
<dbReference type="PRINTS" id="PR00277">
    <property type="entry name" value="INSULIN"/>
</dbReference>
<dbReference type="PRINTS" id="PR00276">
    <property type="entry name" value="INSULINFAMLY"/>
</dbReference>
<dbReference type="SMART" id="SM00078">
    <property type="entry name" value="IlGF"/>
    <property type="match status" value="1"/>
</dbReference>
<dbReference type="SUPFAM" id="SSF56994">
    <property type="entry name" value="Insulin-like"/>
    <property type="match status" value="1"/>
</dbReference>
<dbReference type="PROSITE" id="PS00262">
    <property type="entry name" value="INSULIN"/>
    <property type="match status" value="1"/>
</dbReference>
<proteinExistence type="inferred from homology"/>
<protein>
    <recommendedName>
        <fullName>Insulin</fullName>
    </recommendedName>
    <component>
        <recommendedName>
            <fullName>Insulin B chain</fullName>
        </recommendedName>
    </component>
    <component>
        <recommendedName>
            <fullName>Insulin A chain</fullName>
        </recommendedName>
    </component>
</protein>
<reference key="1">
    <citation type="journal article" date="1987" name="Proc. Natl. Acad. Sci. U.S.A.">
        <title>Sequence of a New World primate insulin having low biological potency and immunoreactivity.</title>
        <authorList>
            <person name="Seino S."/>
            <person name="Steiner D.F."/>
            <person name="Bell G.I."/>
        </authorList>
    </citation>
    <scope>NUCLEOTIDE SEQUENCE [GENOMIC DNA]</scope>
</reference>
<accession>P67972</accession>
<accession>P10604</accession>
<feature type="signal peptide" evidence="2">
    <location>
        <begin position="1"/>
        <end position="24"/>
    </location>
</feature>
<feature type="peptide" id="PRO_0000015755" description="Insulin B chain">
    <location>
        <begin position="25"/>
        <end position="54"/>
    </location>
</feature>
<feature type="propeptide" id="PRO_0000015756" description="C peptide">
    <location>
        <begin position="57"/>
        <end position="85"/>
    </location>
</feature>
<feature type="peptide" id="PRO_0000015757" description="Insulin A chain">
    <location>
        <begin position="88"/>
        <end position="108"/>
    </location>
</feature>
<feature type="disulfide bond" description="Interchain (between B and A chains)" evidence="1">
    <location>
        <begin position="31"/>
        <end position="94"/>
    </location>
</feature>
<feature type="disulfide bond" description="Interchain (between B and A chains)" evidence="1">
    <location>
        <begin position="43"/>
        <end position="107"/>
    </location>
</feature>
<feature type="disulfide bond" evidence="1">
    <location>
        <begin position="93"/>
        <end position="98"/>
    </location>
</feature>
<name>INS_AOTTR</name>
<keyword id="KW-0119">Carbohydrate metabolism</keyword>
<keyword id="KW-0165">Cleavage on pair of basic residues</keyword>
<keyword id="KW-1015">Disulfide bond</keyword>
<keyword id="KW-0313">Glucose metabolism</keyword>
<keyword id="KW-0372">Hormone</keyword>
<keyword id="KW-0964">Secreted</keyword>
<keyword id="KW-0732">Signal</keyword>